<comment type="function">
    <text evidence="1">Escorts unspliced or incompletely spliced viral pre-mRNAs (late transcripts) out of the nucleus of infected cells. These pre-mRNAs carry a recognition sequence called Rev responsive element (RRE) located in the env gene, that is not present in fully spliced viral mRNAs (early transcripts). This function is essential since most viral proteins are translated from unspliced or partially spliced pre-mRNAs which cannot exit the nucleus by the pathway used by fully processed cellular mRNAs. Rev itself is translated from a fully spliced mRNA that readily exits the nucleus. Rev's nuclear localization signal (NLS) binds directly to KPNB1/Importin beta-1 without previous binding to KPNA1/Importin alpha-1. KPNB1 binds to the GDP bound form of RAN (Ran-GDP) and targets Rev to the nucleus. In the nucleus, the conversion from Ran-GDP to Ran-GTP dissociates Rev from KPNB1 and allows Rev's binding to the RRE in viral pre-mRNAs. Rev multimerization on the RRE via cooperative assembly exposes its nuclear export signal (NES) to the surface. Rev can then form a complex with XPO1/CRM1 and Ran-GTP, leading to nuclear export of the complex. Conversion from Ran-GTP to Ran-GDP mediates dissociation of the Rev/RRE/XPO1/RAN complex, so that Rev can return to the nucleus for a subsequent round of export. Beside KPNB1, also seems to interact with TNPO1/Transportin-1, RANBP5/IPO5 and IPO7/RANBP7 for nuclear import. The nucleoporin-like HRB/RIP is an essential cofactor that probably indirectly interacts with Rev to release HIV RNAs from the perinuclear region to the cytoplasm.</text>
</comment>
<comment type="subunit">
    <text evidence="1">Homomultimer; when bound to the RRE. Multimeric assembly is essential for activity and may involve XPO1. Binds to human KPNB1, XPO1, TNPO1, RANBP5 and IPO7. Interacts with the viral Integrase. Interacts with human KHDRBS1. Interacts with human NAP1; this interaction decreases Rev multimerization and stimulates its activity. Interacts with human DEAD-box helicases DDX3 and DDX24; these interactions may serve for viral RNA export to the cytoplasm and packaging, respectively. Interacts with human PSIP1; this interaction may inhibit HIV-1 DNA integration by promoting dissociation of the Integrase-LEDGF/p75 complex.</text>
</comment>
<comment type="subcellular location">
    <subcellularLocation>
        <location evidence="1">Host nucleus</location>
        <location evidence="1">Host nucleolus</location>
    </subcellularLocation>
    <subcellularLocation>
        <location evidence="1">Host cytoplasm</location>
    </subcellularLocation>
    <text evidence="1">The presence of both nuclear import and nuclear export signals leads to continuous shuttling between the nucleus and cytoplasm.</text>
</comment>
<comment type="domain">
    <text evidence="1">The RNA-binding motif binds to the RRE, a 240 bp stem-and-loop structure present in incompletely spliced viral pre-mRNAs. This region also contains the NLS which mediates nuclear localization via KPNB1 binding and, when the N-terminal sequence is present, nucleolar targeting. These overlapping functions prevent Rev bound to RRE from undesirable return to the nucleus. When Rev binds the RRE, the NLS becomes masked while the NES remains accessible. The leucine-rich NES mediates binding to human XPO1.</text>
</comment>
<comment type="PTM">
    <text evidence="1">Asymmetrically arginine dimethylated at one site by host PRMT6. Methylation impairs the RNA-binding activity and export of viral RNA from the nucleus to the cytoplasm.</text>
</comment>
<comment type="PTM">
    <text evidence="1">Phosphorylated by protein kinase CK2. Presence of, and maybe binding to the N-terminus of the regulatory beta subunit of CK2 is necessary for CK2-mediated Rev's phosphorylation.</text>
</comment>
<comment type="miscellaneous">
    <text evidence="1">HIV-1 lineages are divided in three main groups, M (for Major), O (for Outlier), and N (for New, or Non-M, Non-O). The vast majority of strains found worldwide belong to the group M. Group O seems to be endemic to and largely confined to Cameroon and neighboring countries in West Central Africa, where these viruses represent a small minority of HIV-1 strains. The group N is represented by a limited number of isolates from Cameroonian persons. The group M is further subdivided in 9 clades or subtypes (A to D, F to H, J and K).</text>
</comment>
<comment type="similarity">
    <text evidence="1">Belongs to the HIV-1 REV protein family.</text>
</comment>
<gene>
    <name evidence="1" type="primary">rev</name>
</gene>
<protein>
    <recommendedName>
        <fullName evidence="1">Protein Rev</fullName>
    </recommendedName>
    <alternativeName>
        <fullName evidence="1">ART/TRS</fullName>
    </alternativeName>
    <alternativeName>
        <fullName evidence="1">Anti-repression transactivator</fullName>
    </alternativeName>
    <alternativeName>
        <fullName evidence="1">Regulator of expression of viral proteins</fullName>
    </alternativeName>
</protein>
<sequence>MAGGSGNSDEELLRAVRIIKILYQSNPYPSPEGSRQARRNRRRRWRARQRQINSLSERILSTCLERPTGPVSLPLPPIERLTLDSAEDIGTGGTDPPQGTETGTGSPNTPEGHSTILGTGAKN</sequence>
<organism>
    <name type="scientific">Simian immunodeficiency virus (isolate MB66)</name>
    <name type="common">SIV-cpz</name>
    <name type="synonym">Chimpanzee immunodeficiency virus</name>
    <dbReference type="NCBI Taxonomy" id="388911"/>
    <lineage>
        <taxon>Viruses</taxon>
        <taxon>Riboviria</taxon>
        <taxon>Pararnavirae</taxon>
        <taxon>Artverviricota</taxon>
        <taxon>Revtraviricetes</taxon>
        <taxon>Ortervirales</taxon>
        <taxon>Retroviridae</taxon>
        <taxon>Orthoretrovirinae</taxon>
        <taxon>Lentivirus</taxon>
        <taxon>Simian immunodeficiency virus</taxon>
    </lineage>
</organism>
<evidence type="ECO:0000255" key="1">
    <source>
        <dbReference type="HAMAP-Rule" id="MF_04077"/>
    </source>
</evidence>
<evidence type="ECO:0000256" key="2">
    <source>
        <dbReference type="SAM" id="MobiDB-lite"/>
    </source>
</evidence>
<proteinExistence type="inferred from homology"/>
<organismHost>
    <name type="scientific">Pan troglodytes</name>
    <name type="common">Chimpanzee</name>
    <dbReference type="NCBI Taxonomy" id="9598"/>
</organismHost>
<reference key="1">
    <citation type="journal article" date="2006" name="Science">
        <title>Chimpanzee reservoirs of pandemic and nonpandemic HIV-1.</title>
        <authorList>
            <person name="Keele B.F."/>
            <person name="Van Heuverswyn F."/>
            <person name="Li Y."/>
            <person name="Bailes E."/>
            <person name="Takehisa J."/>
            <person name="Santiago M.L."/>
            <person name="Bibollet-Ruche F."/>
            <person name="Chen Y."/>
            <person name="Wain L.V."/>
            <person name="Liegeois F."/>
            <person name="Loul S."/>
            <person name="Ngole E.M."/>
            <person name="Bienvenue Y."/>
            <person name="Delaporte E."/>
            <person name="Brookfield J.F."/>
            <person name="Sharp P.M."/>
            <person name="Shaw G.M."/>
            <person name="Peeters M."/>
            <person name="Hahn B.H."/>
        </authorList>
    </citation>
    <scope>NUCLEOTIDE SEQUENCE [GENOMIC RNA]</scope>
</reference>
<feature type="chain" id="PRO_0000249346" description="Protein Rev">
    <location>
        <begin position="1"/>
        <end position="123"/>
    </location>
</feature>
<feature type="region of interest" description="Homomultimerization" evidence="1">
    <location>
        <begin position="18"/>
        <end position="26"/>
    </location>
</feature>
<feature type="region of interest" description="Disordered" evidence="2">
    <location>
        <begin position="24"/>
        <end position="49"/>
    </location>
</feature>
<feature type="region of interest" description="Disordered" evidence="2">
    <location>
        <begin position="82"/>
        <end position="123"/>
    </location>
</feature>
<feature type="short sequence motif" description="Nuclear localization signal and RNA-binding (RRE)" evidence="1">
    <location>
        <begin position="34"/>
        <end position="50"/>
    </location>
</feature>
<feature type="short sequence motif" description="Nuclear export signal and binding to XPO1" evidence="1">
    <location>
        <begin position="73"/>
        <end position="84"/>
    </location>
</feature>
<feature type="compositionally biased region" description="Basic residues" evidence="2">
    <location>
        <begin position="36"/>
        <end position="49"/>
    </location>
</feature>
<feature type="compositionally biased region" description="Polar residues" evidence="2">
    <location>
        <begin position="97"/>
        <end position="112"/>
    </location>
</feature>
<feature type="modified residue" description="Phosphoserine; by host CK2" evidence="1">
    <location>
        <position position="5"/>
    </location>
</feature>
<feature type="modified residue" description="Phosphoserine; by host CK2" evidence="1">
    <location>
        <position position="8"/>
    </location>
</feature>
<dbReference type="EMBL" id="DQ373063">
    <property type="protein sequence ID" value="ABD19479.1"/>
    <property type="molecule type" value="Genomic_RNA"/>
</dbReference>
<dbReference type="SMR" id="Q1A263"/>
<dbReference type="Proteomes" id="UP000009152">
    <property type="component" value="Segment"/>
</dbReference>
<dbReference type="GO" id="GO:0030430">
    <property type="term" value="C:host cell cytoplasm"/>
    <property type="evidence" value="ECO:0007669"/>
    <property type="project" value="UniProtKB-SubCell"/>
</dbReference>
<dbReference type="GO" id="GO:0044196">
    <property type="term" value="C:host cell nucleolus"/>
    <property type="evidence" value="ECO:0007669"/>
    <property type="project" value="UniProtKB-SubCell"/>
</dbReference>
<dbReference type="GO" id="GO:0003700">
    <property type="term" value="F:DNA-binding transcription factor activity"/>
    <property type="evidence" value="ECO:0007669"/>
    <property type="project" value="UniProtKB-UniRule"/>
</dbReference>
<dbReference type="GO" id="GO:0003723">
    <property type="term" value="F:RNA binding"/>
    <property type="evidence" value="ECO:0007669"/>
    <property type="project" value="UniProtKB-UniRule"/>
</dbReference>
<dbReference type="GO" id="GO:0051028">
    <property type="term" value="P:mRNA transport"/>
    <property type="evidence" value="ECO:0007669"/>
    <property type="project" value="UniProtKB-UniRule"/>
</dbReference>
<dbReference type="GO" id="GO:0016032">
    <property type="term" value="P:viral process"/>
    <property type="evidence" value="ECO:0007669"/>
    <property type="project" value="UniProtKB-UniRule"/>
</dbReference>
<dbReference type="Gene3D" id="6.10.140.630">
    <property type="match status" value="1"/>
</dbReference>
<dbReference type="HAMAP" id="MF_04077">
    <property type="entry name" value="REV_HIV1"/>
    <property type="match status" value="1"/>
</dbReference>
<dbReference type="InterPro" id="IPR000625">
    <property type="entry name" value="REV_protein"/>
</dbReference>
<dbReference type="Pfam" id="PF00424">
    <property type="entry name" value="REV"/>
    <property type="match status" value="1"/>
</dbReference>
<keyword id="KW-0014">AIDS</keyword>
<keyword id="KW-1035">Host cytoplasm</keyword>
<keyword id="KW-1048">Host nucleus</keyword>
<keyword id="KW-0945">Host-virus interaction</keyword>
<keyword id="KW-0488">Methylation</keyword>
<keyword id="KW-0509">mRNA transport</keyword>
<keyword id="KW-0597">Phosphoprotein</keyword>
<keyword id="KW-1185">Reference proteome</keyword>
<keyword id="KW-0694">RNA-binding</keyword>
<keyword id="KW-0813">Transport</keyword>
<name>REV_SIVMB</name>
<accession>Q1A263</accession>